<keyword id="KW-0472">Membrane</keyword>
<keyword id="KW-0520">NAD</keyword>
<keyword id="KW-0521">NADP</keyword>
<keyword id="KW-0618">Plastoquinone</keyword>
<keyword id="KW-0874">Quinone</keyword>
<keyword id="KW-0793">Thylakoid</keyword>
<keyword id="KW-1278">Translocase</keyword>
<keyword id="KW-0812">Transmembrane</keyword>
<keyword id="KW-1133">Transmembrane helix</keyword>
<keyword id="KW-0813">Transport</keyword>
<feature type="chain" id="PRO_5000127100" description="NAD(P)H-quinone oxidoreductase subunit L">
    <location>
        <begin position="1"/>
        <end position="78"/>
    </location>
</feature>
<feature type="transmembrane region" description="Helical" evidence="1">
    <location>
        <begin position="10"/>
        <end position="30"/>
    </location>
</feature>
<feature type="transmembrane region" description="Helical" evidence="1">
    <location>
        <begin position="47"/>
        <end position="67"/>
    </location>
</feature>
<proteinExistence type="inferred from homology"/>
<evidence type="ECO:0000255" key="1">
    <source>
        <dbReference type="HAMAP-Rule" id="MF_01355"/>
    </source>
</evidence>
<protein>
    <recommendedName>
        <fullName evidence="1">NAD(P)H-quinone oxidoreductase subunit L</fullName>
        <ecNumber evidence="1">7.1.1.-</ecNumber>
    </recommendedName>
    <alternativeName>
        <fullName evidence="1">NAD(P)H dehydrogenase I subunit L</fullName>
    </alternativeName>
    <alternativeName>
        <fullName>NDH-1 subunit L</fullName>
    </alternativeName>
    <alternativeName>
        <fullName>NDH-L</fullName>
    </alternativeName>
</protein>
<sequence>MNLDLDTNLIILIIYAALAGAYFLVMPAIVYAYLKTRWYVVSSIERVFMYFLMFLFFPGMLVLSPFLNFRPRKQQIES</sequence>
<name>NDHL_TRIEI</name>
<dbReference type="EC" id="7.1.1.-" evidence="1"/>
<dbReference type="EMBL" id="CP000393">
    <property type="protein sequence ID" value="ABG53481.1"/>
    <property type="molecule type" value="Genomic_DNA"/>
</dbReference>
<dbReference type="RefSeq" id="WP_011613803.1">
    <property type="nucleotide sequence ID" value="NC_008312.1"/>
</dbReference>
<dbReference type="SMR" id="Q10W93"/>
<dbReference type="STRING" id="203124.Tery_4495"/>
<dbReference type="KEGG" id="ter:Tery_4495"/>
<dbReference type="eggNOG" id="ENOG5032ZM4">
    <property type="taxonomic scope" value="Bacteria"/>
</dbReference>
<dbReference type="HOGENOM" id="CLU_171077_0_0_3"/>
<dbReference type="OrthoDB" id="517549at2"/>
<dbReference type="GO" id="GO:0031676">
    <property type="term" value="C:plasma membrane-derived thylakoid membrane"/>
    <property type="evidence" value="ECO:0007669"/>
    <property type="project" value="UniProtKB-SubCell"/>
</dbReference>
<dbReference type="GO" id="GO:0016655">
    <property type="term" value="F:oxidoreductase activity, acting on NAD(P)H, quinone or similar compound as acceptor"/>
    <property type="evidence" value="ECO:0007669"/>
    <property type="project" value="UniProtKB-UniRule"/>
</dbReference>
<dbReference type="GO" id="GO:0048038">
    <property type="term" value="F:quinone binding"/>
    <property type="evidence" value="ECO:0007669"/>
    <property type="project" value="UniProtKB-KW"/>
</dbReference>
<dbReference type="HAMAP" id="MF_01355">
    <property type="entry name" value="NDH1_NDH1L"/>
    <property type="match status" value="1"/>
</dbReference>
<dbReference type="InterPro" id="IPR019654">
    <property type="entry name" value="NADH-quinone_OxRdatse_su_L"/>
</dbReference>
<dbReference type="PANTHER" id="PTHR36727">
    <property type="entry name" value="NAD(P)H-QUINONE OXIDOREDUCTASE SUBUNIT L, CHLOROPLASTIC"/>
    <property type="match status" value="1"/>
</dbReference>
<dbReference type="PANTHER" id="PTHR36727:SF2">
    <property type="entry name" value="NAD(P)H-QUINONE OXIDOREDUCTASE SUBUNIT L, CHLOROPLASTIC"/>
    <property type="match status" value="1"/>
</dbReference>
<dbReference type="Pfam" id="PF10716">
    <property type="entry name" value="NdhL"/>
    <property type="match status" value="1"/>
</dbReference>
<organism>
    <name type="scientific">Trichodesmium erythraeum (strain IMS101)</name>
    <dbReference type="NCBI Taxonomy" id="203124"/>
    <lineage>
        <taxon>Bacteria</taxon>
        <taxon>Bacillati</taxon>
        <taxon>Cyanobacteriota</taxon>
        <taxon>Cyanophyceae</taxon>
        <taxon>Oscillatoriophycideae</taxon>
        <taxon>Oscillatoriales</taxon>
        <taxon>Microcoleaceae</taxon>
        <taxon>Trichodesmium</taxon>
    </lineage>
</organism>
<accession>Q10W93</accession>
<gene>
    <name evidence="1" type="primary">ndhL</name>
    <name type="ordered locus">Tery_4495</name>
</gene>
<comment type="function">
    <text evidence="1">NDH-1 shuttles electrons from an unknown electron donor, via FMN and iron-sulfur (Fe-S) centers, to quinones in the respiratory and/or the photosynthetic chain. The immediate electron acceptor for the enzyme in this species is believed to be plastoquinone. Couples the redox reaction to proton translocation, and thus conserves the redox energy in a proton gradient. Cyanobacterial NDH-1 also plays a role in inorganic carbon-concentration.</text>
</comment>
<comment type="catalytic activity">
    <reaction evidence="1">
        <text>a plastoquinone + NADH + (n+1) H(+)(in) = a plastoquinol + NAD(+) + n H(+)(out)</text>
        <dbReference type="Rhea" id="RHEA:42608"/>
        <dbReference type="Rhea" id="RHEA-COMP:9561"/>
        <dbReference type="Rhea" id="RHEA-COMP:9562"/>
        <dbReference type="ChEBI" id="CHEBI:15378"/>
        <dbReference type="ChEBI" id="CHEBI:17757"/>
        <dbReference type="ChEBI" id="CHEBI:57540"/>
        <dbReference type="ChEBI" id="CHEBI:57945"/>
        <dbReference type="ChEBI" id="CHEBI:62192"/>
    </reaction>
</comment>
<comment type="catalytic activity">
    <reaction evidence="1">
        <text>a plastoquinone + NADPH + (n+1) H(+)(in) = a plastoquinol + NADP(+) + n H(+)(out)</text>
        <dbReference type="Rhea" id="RHEA:42612"/>
        <dbReference type="Rhea" id="RHEA-COMP:9561"/>
        <dbReference type="Rhea" id="RHEA-COMP:9562"/>
        <dbReference type="ChEBI" id="CHEBI:15378"/>
        <dbReference type="ChEBI" id="CHEBI:17757"/>
        <dbReference type="ChEBI" id="CHEBI:57783"/>
        <dbReference type="ChEBI" id="CHEBI:58349"/>
        <dbReference type="ChEBI" id="CHEBI:62192"/>
    </reaction>
</comment>
<comment type="subunit">
    <text evidence="1">NDH-1 can be composed of about 15 different subunits; different subcomplexes with different compositions have been identified which probably have different functions.</text>
</comment>
<comment type="subcellular location">
    <subcellularLocation>
        <location evidence="1">Cellular thylakoid membrane</location>
        <topology evidence="1">Multi-pass membrane protein</topology>
    </subcellularLocation>
</comment>
<comment type="similarity">
    <text evidence="1">Belongs to the complex I NdhL subunit family.</text>
</comment>
<reference key="1">
    <citation type="journal article" date="2015" name="Proc. Natl. Acad. Sci. U.S.A.">
        <title>Trichodesmium genome maintains abundant, widespread noncoding DNA in situ, despite oligotrophic lifestyle.</title>
        <authorList>
            <person name="Walworth N."/>
            <person name="Pfreundt U."/>
            <person name="Nelson W.C."/>
            <person name="Mincer T."/>
            <person name="Heidelberg J.F."/>
            <person name="Fu F."/>
            <person name="Waterbury J.B."/>
            <person name="Glavina del Rio T."/>
            <person name="Goodwin L."/>
            <person name="Kyrpides N.C."/>
            <person name="Land M.L."/>
            <person name="Woyke T."/>
            <person name="Hutchins D.A."/>
            <person name="Hess W.R."/>
            <person name="Webb E.A."/>
        </authorList>
    </citation>
    <scope>NUCLEOTIDE SEQUENCE [LARGE SCALE GENOMIC DNA]</scope>
    <source>
        <strain>IMS101</strain>
    </source>
</reference>